<accession>A4SMC0</accession>
<name>RBSD_AERS4</name>
<evidence type="ECO:0000255" key="1">
    <source>
        <dbReference type="HAMAP-Rule" id="MF_01661"/>
    </source>
</evidence>
<comment type="function">
    <text evidence="1">Catalyzes the interconversion of beta-pyran and beta-furan forms of D-ribose.</text>
</comment>
<comment type="catalytic activity">
    <reaction evidence="1">
        <text>beta-D-ribopyranose = beta-D-ribofuranose</text>
        <dbReference type="Rhea" id="RHEA:25432"/>
        <dbReference type="ChEBI" id="CHEBI:27476"/>
        <dbReference type="ChEBI" id="CHEBI:47002"/>
        <dbReference type="EC" id="5.4.99.62"/>
    </reaction>
</comment>
<comment type="pathway">
    <text evidence="1">Carbohydrate metabolism; D-ribose degradation; D-ribose 5-phosphate from beta-D-ribopyranose: step 1/2.</text>
</comment>
<comment type="subunit">
    <text evidence="1">Homodecamer.</text>
</comment>
<comment type="subcellular location">
    <subcellularLocation>
        <location evidence="1">Cytoplasm</location>
    </subcellularLocation>
</comment>
<comment type="similarity">
    <text evidence="1">Belongs to the RbsD / FucU family. RbsD subfamily.</text>
</comment>
<proteinExistence type="inferred from homology"/>
<organism>
    <name type="scientific">Aeromonas salmonicida (strain A449)</name>
    <dbReference type="NCBI Taxonomy" id="382245"/>
    <lineage>
        <taxon>Bacteria</taxon>
        <taxon>Pseudomonadati</taxon>
        <taxon>Pseudomonadota</taxon>
        <taxon>Gammaproteobacteria</taxon>
        <taxon>Aeromonadales</taxon>
        <taxon>Aeromonadaceae</taxon>
        <taxon>Aeromonas</taxon>
    </lineage>
</organism>
<reference key="1">
    <citation type="journal article" date="2008" name="BMC Genomics">
        <title>The genome of Aeromonas salmonicida subsp. salmonicida A449: insights into the evolution of a fish pathogen.</title>
        <authorList>
            <person name="Reith M.E."/>
            <person name="Singh R.K."/>
            <person name="Curtis B."/>
            <person name="Boyd J.M."/>
            <person name="Bouevitch A."/>
            <person name="Kimball J."/>
            <person name="Munholland J."/>
            <person name="Murphy C."/>
            <person name="Sarty D."/>
            <person name="Williams J."/>
            <person name="Nash J.H."/>
            <person name="Johnson S.C."/>
            <person name="Brown L.L."/>
        </authorList>
    </citation>
    <scope>NUCLEOTIDE SEQUENCE [LARGE SCALE GENOMIC DNA]</scope>
    <source>
        <strain>A449</strain>
    </source>
</reference>
<sequence length="139" mass="15012">MKRGVLLNAPLSALVAQMGHTDEITVCDAGLPIPAGPERIDLALMAGTPNLQTVLKALLTDLVVEKVIMASEIKLISPDTHQALLDQIETHSLEQGKPIAIEYCLHEEFKTRSRQSKAIVRSGEITPYANLILCAGVAF</sequence>
<protein>
    <recommendedName>
        <fullName evidence="1">D-ribose pyranase</fullName>
        <ecNumber evidence="1">5.4.99.62</ecNumber>
    </recommendedName>
</protein>
<keyword id="KW-0119">Carbohydrate metabolism</keyword>
<keyword id="KW-0963">Cytoplasm</keyword>
<keyword id="KW-0413">Isomerase</keyword>
<dbReference type="EC" id="5.4.99.62" evidence="1"/>
<dbReference type="EMBL" id="CP000644">
    <property type="protein sequence ID" value="ABO90042.1"/>
    <property type="molecule type" value="Genomic_DNA"/>
</dbReference>
<dbReference type="RefSeq" id="WP_005315575.1">
    <property type="nucleotide sequence ID" value="NC_009348.1"/>
</dbReference>
<dbReference type="SMR" id="A4SMC0"/>
<dbReference type="STRING" id="29491.GCA_000820065_03889"/>
<dbReference type="KEGG" id="asa:ASA_1971"/>
<dbReference type="PATRIC" id="fig|382245.13.peg.1956"/>
<dbReference type="eggNOG" id="COG1869">
    <property type="taxonomic scope" value="Bacteria"/>
</dbReference>
<dbReference type="HOGENOM" id="CLU_135498_0_0_6"/>
<dbReference type="UniPathway" id="UPA00916">
    <property type="reaction ID" value="UER00888"/>
</dbReference>
<dbReference type="Proteomes" id="UP000000225">
    <property type="component" value="Chromosome"/>
</dbReference>
<dbReference type="GO" id="GO:0005829">
    <property type="term" value="C:cytosol"/>
    <property type="evidence" value="ECO:0007669"/>
    <property type="project" value="TreeGrafter"/>
</dbReference>
<dbReference type="GO" id="GO:0062193">
    <property type="term" value="F:D-ribose pyranase activity"/>
    <property type="evidence" value="ECO:0007669"/>
    <property type="project" value="UniProtKB-EC"/>
</dbReference>
<dbReference type="GO" id="GO:0016872">
    <property type="term" value="F:intramolecular lyase activity"/>
    <property type="evidence" value="ECO:0007669"/>
    <property type="project" value="UniProtKB-UniRule"/>
</dbReference>
<dbReference type="GO" id="GO:0048029">
    <property type="term" value="F:monosaccharide binding"/>
    <property type="evidence" value="ECO:0007669"/>
    <property type="project" value="InterPro"/>
</dbReference>
<dbReference type="GO" id="GO:0019303">
    <property type="term" value="P:D-ribose catabolic process"/>
    <property type="evidence" value="ECO:0007669"/>
    <property type="project" value="UniProtKB-UniRule"/>
</dbReference>
<dbReference type="Gene3D" id="3.40.1650.10">
    <property type="entry name" value="RbsD-like domain"/>
    <property type="match status" value="1"/>
</dbReference>
<dbReference type="HAMAP" id="MF_01661">
    <property type="entry name" value="D_rib_pyranase"/>
    <property type="match status" value="1"/>
</dbReference>
<dbReference type="InterPro" id="IPR023064">
    <property type="entry name" value="D-ribose_pyranase"/>
</dbReference>
<dbReference type="InterPro" id="IPR023750">
    <property type="entry name" value="RbsD-like_sf"/>
</dbReference>
<dbReference type="InterPro" id="IPR007721">
    <property type="entry name" value="RbsD_FucU"/>
</dbReference>
<dbReference type="NCBIfam" id="NF008761">
    <property type="entry name" value="PRK11797.1"/>
    <property type="match status" value="1"/>
</dbReference>
<dbReference type="PANTHER" id="PTHR37831">
    <property type="entry name" value="D-RIBOSE PYRANASE"/>
    <property type="match status" value="1"/>
</dbReference>
<dbReference type="PANTHER" id="PTHR37831:SF1">
    <property type="entry name" value="D-RIBOSE PYRANASE"/>
    <property type="match status" value="1"/>
</dbReference>
<dbReference type="Pfam" id="PF05025">
    <property type="entry name" value="RbsD_FucU"/>
    <property type="match status" value="1"/>
</dbReference>
<dbReference type="SUPFAM" id="SSF102546">
    <property type="entry name" value="RbsD-like"/>
    <property type="match status" value="1"/>
</dbReference>
<feature type="chain" id="PRO_0000346168" description="D-ribose pyranase">
    <location>
        <begin position="1"/>
        <end position="139"/>
    </location>
</feature>
<feature type="active site" description="Proton donor" evidence="1">
    <location>
        <position position="20"/>
    </location>
</feature>
<feature type="binding site" evidence="1">
    <location>
        <position position="28"/>
    </location>
    <ligand>
        <name>substrate</name>
    </ligand>
</feature>
<feature type="binding site" evidence="1">
    <location>
        <position position="106"/>
    </location>
    <ligand>
        <name>substrate</name>
    </ligand>
</feature>
<feature type="binding site" evidence="1">
    <location>
        <begin position="128"/>
        <end position="130"/>
    </location>
    <ligand>
        <name>substrate</name>
    </ligand>
</feature>
<gene>
    <name evidence="1" type="primary">rbsD</name>
    <name type="ordered locus">ASA_1971</name>
</gene>